<protein>
    <recommendedName>
        <fullName evidence="4">Carwaprin-b</fullName>
    </recommendedName>
</protein>
<comment type="function">
    <text evidence="1">Damages membranes of susceptible bacteria. Has no hemolytic activity. Not toxic to mice. Does not inhibit the proteinases elastase and cathepsin G.</text>
</comment>
<comment type="subcellular location">
    <subcellularLocation>
        <location evidence="6">Secreted</location>
    </subcellularLocation>
</comment>
<comment type="tissue specificity">
    <text evidence="6">Expressed by the venom gland.</text>
</comment>
<comment type="similarity">
    <text evidence="5">Belongs to the venom waprin family.</text>
</comment>
<organism>
    <name type="scientific">Tropidechis carinatus</name>
    <name type="common">Australian rough-scaled snake</name>
    <dbReference type="NCBI Taxonomy" id="100989"/>
    <lineage>
        <taxon>Eukaryota</taxon>
        <taxon>Metazoa</taxon>
        <taxon>Chordata</taxon>
        <taxon>Craniata</taxon>
        <taxon>Vertebrata</taxon>
        <taxon>Euteleostomi</taxon>
        <taxon>Lepidosauria</taxon>
        <taxon>Squamata</taxon>
        <taxon>Bifurcata</taxon>
        <taxon>Unidentata</taxon>
        <taxon>Episquamata</taxon>
        <taxon>Toxicofera</taxon>
        <taxon>Serpentes</taxon>
        <taxon>Colubroidea</taxon>
        <taxon>Elapidae</taxon>
        <taxon>Notechinae</taxon>
        <taxon>Tropidechis</taxon>
    </lineage>
</organism>
<sequence length="75" mass="8477">MSSGGLLLLLGLLTLWAELTPVSSQDRPKKPGLCPPRPQKPPCVRECKNDWRCPGEQKCCRYGCIYECRDPIFVK</sequence>
<reference key="1">
    <citation type="journal article" date="2008" name="Cell. Mol. Life Sci.">
        <title>Common evolution of waprin and Kunitz-like toxin families in Australian venomous snakes.</title>
        <authorList>
            <person name="St Pierre L."/>
            <person name="Earl S.T."/>
            <person name="Filippovich I."/>
            <person name="Sorokina N."/>
            <person name="Masci P.P."/>
            <person name="De Jersey J."/>
            <person name="Lavin M.F."/>
        </authorList>
    </citation>
    <scope>NUCLEOTIDE SEQUENCE [GENOMIC DNA]</scope>
    <source>
        <tissue>Venom gland</tissue>
    </source>
</reference>
<keyword id="KW-0044">Antibiotic</keyword>
<keyword id="KW-0929">Antimicrobial</keyword>
<keyword id="KW-1015">Disulfide bond</keyword>
<keyword id="KW-0964">Secreted</keyword>
<keyword id="KW-0732">Signal</keyword>
<proteinExistence type="inferred from homology"/>
<evidence type="ECO:0000250" key="1">
    <source>
        <dbReference type="UniProtKB" id="P83952"/>
    </source>
</evidence>
<evidence type="ECO:0000255" key="2"/>
<evidence type="ECO:0000255" key="3">
    <source>
        <dbReference type="PROSITE-ProRule" id="PRU00722"/>
    </source>
</evidence>
<evidence type="ECO:0000303" key="4">
    <source>
    </source>
</evidence>
<evidence type="ECO:0000305" key="5"/>
<evidence type="ECO:0000305" key="6">
    <source>
    </source>
</evidence>
<dbReference type="EMBL" id="EU401828">
    <property type="protein sequence ID" value="ACC77777.1"/>
    <property type="molecule type" value="Genomic_DNA"/>
</dbReference>
<dbReference type="SMR" id="B5L5P0"/>
<dbReference type="GO" id="GO:0005576">
    <property type="term" value="C:extracellular region"/>
    <property type="evidence" value="ECO:0000250"/>
    <property type="project" value="UniProtKB"/>
</dbReference>
<dbReference type="GO" id="GO:0005615">
    <property type="term" value="C:extracellular space"/>
    <property type="evidence" value="ECO:0007669"/>
    <property type="project" value="TreeGrafter"/>
</dbReference>
<dbReference type="GO" id="GO:0004867">
    <property type="term" value="F:serine-type endopeptidase inhibitor activity"/>
    <property type="evidence" value="ECO:0007669"/>
    <property type="project" value="TreeGrafter"/>
</dbReference>
<dbReference type="GO" id="GO:0019731">
    <property type="term" value="P:antibacterial humoral response"/>
    <property type="evidence" value="ECO:0007669"/>
    <property type="project" value="TreeGrafter"/>
</dbReference>
<dbReference type="GO" id="GO:0045087">
    <property type="term" value="P:innate immune response"/>
    <property type="evidence" value="ECO:0007669"/>
    <property type="project" value="TreeGrafter"/>
</dbReference>
<dbReference type="GO" id="GO:0044278">
    <property type="term" value="P:venom-mediated disruption of cell wall in another organism"/>
    <property type="evidence" value="ECO:0000250"/>
    <property type="project" value="UniProtKB"/>
</dbReference>
<dbReference type="Gene3D" id="4.10.75.10">
    <property type="entry name" value="Elafin-like"/>
    <property type="match status" value="1"/>
</dbReference>
<dbReference type="InterPro" id="IPR036645">
    <property type="entry name" value="Elafin-like_sf"/>
</dbReference>
<dbReference type="InterPro" id="IPR008197">
    <property type="entry name" value="WAP_dom"/>
</dbReference>
<dbReference type="InterPro" id="IPR050514">
    <property type="entry name" value="WAP_four-disulfide_core"/>
</dbReference>
<dbReference type="PANTHER" id="PTHR19441:SF44">
    <property type="entry name" value="ANTILEUKOPROTEINASE"/>
    <property type="match status" value="1"/>
</dbReference>
<dbReference type="PANTHER" id="PTHR19441">
    <property type="entry name" value="WHEY ACDIC PROTEIN WAP"/>
    <property type="match status" value="1"/>
</dbReference>
<dbReference type="Pfam" id="PF00095">
    <property type="entry name" value="WAP"/>
    <property type="match status" value="1"/>
</dbReference>
<dbReference type="PRINTS" id="PR00003">
    <property type="entry name" value="4DISULPHCORE"/>
</dbReference>
<dbReference type="SMART" id="SM00217">
    <property type="entry name" value="WAP"/>
    <property type="match status" value="1"/>
</dbReference>
<dbReference type="SUPFAM" id="SSF57256">
    <property type="entry name" value="Elafin-like"/>
    <property type="match status" value="1"/>
</dbReference>
<dbReference type="PROSITE" id="PS51390">
    <property type="entry name" value="WAP"/>
    <property type="match status" value="1"/>
</dbReference>
<name>WAPB_TROCA</name>
<accession>B5L5P0</accession>
<feature type="signal peptide" evidence="2">
    <location>
        <begin position="1"/>
        <end position="24"/>
    </location>
</feature>
<feature type="chain" id="PRO_5000395628" description="Carwaprin-b">
    <location>
        <begin position="25"/>
        <end position="75"/>
    </location>
</feature>
<feature type="domain" description="WAP" evidence="3">
    <location>
        <begin position="27"/>
        <end position="72"/>
    </location>
</feature>
<feature type="disulfide bond" evidence="3">
    <location>
        <begin position="34"/>
        <end position="60"/>
    </location>
</feature>
<feature type="disulfide bond" evidence="3">
    <location>
        <begin position="43"/>
        <end position="64"/>
    </location>
</feature>
<feature type="disulfide bond" evidence="3">
    <location>
        <begin position="47"/>
        <end position="59"/>
    </location>
</feature>
<feature type="disulfide bond" evidence="3">
    <location>
        <begin position="53"/>
        <end position="68"/>
    </location>
</feature>